<reference key="1">
    <citation type="journal article" date="1992" name="Eur. J. Biochem.">
        <title>Characterization and molecular cloning of neurotoxic phospholipases A2 from Taiwan viper (Vipera russelli formosensis).</title>
        <authorList>
            <person name="Wang Y.-M."/>
            <person name="Lu P.-J."/>
            <person name="Ho C.-L."/>
            <person name="Tsai I.-H."/>
        </authorList>
    </citation>
    <scope>NUCLEOTIDE SEQUENCE [MRNA]</scope>
    <scope>PROTEIN SEQUENCE OF 17-66</scope>
    <scope>FUNCTION</scope>
    <scope>SUBCELLULAR LOCATION</scope>
    <source>
        <tissue>Venom</tissue>
        <tissue>Venom gland</tissue>
    </source>
</reference>
<reference key="2">
    <citation type="journal article" date="1996" name="Toxicon">
        <title>Two types of Russell's viper revealed by variation in phospholipases A2 from venom of the subspecies.</title>
        <authorList>
            <person name="Tsai I.-H."/>
            <person name="Lu P.-J."/>
            <person name="Su J.-C."/>
        </authorList>
    </citation>
    <scope>PROTEIN SEQUENCE OF 17-66</scope>
    <scope>FUNCTION</scope>
    <scope>TOXIC DOSE</scope>
    <scope>SUBCELLULAR LOCATION</scope>
    <source>
        <tissue>Venom</tissue>
    </source>
</reference>
<reference key="3">
    <citation type="journal article" date="2003" name="Acta Crystallogr. D">
        <title>Structure of the heterodimeric neurotoxic complex viperotoxin F (RV-4/RV-7) from the venom of Vipera russelli formosensis at 1.9 A resolution.</title>
        <authorList>
            <person name="Perbandt M."/>
            <person name="Tsai I.-H."/>
            <person name="Fuchs A."/>
            <person name="Banumathi S."/>
            <person name="Rajashankar K.R."/>
            <person name="Georgieva D."/>
            <person name="Kalkura N."/>
            <person name="Singh T.P."/>
            <person name="Genov N."/>
            <person name="Betzel C."/>
        </authorList>
    </citation>
    <scope>X-RAY CRYSTALLOGRAPHY (1.9 ANGSTROMS) OF 17-138</scope>
    <scope>DISULFIDE BONDS</scope>
    <source>
        <tissue>Venom</tissue>
    </source>
</reference>
<accession>Q02471</accession>
<protein>
    <recommendedName>
        <fullName>Basic phospholipase A2 RV-4</fullName>
        <shortName>svPLA2</shortName>
        <ecNumber>3.1.1.4</ecNumber>
    </recommendedName>
    <alternativeName>
        <fullName>F4</fullName>
    </alternativeName>
    <alternativeName>
        <fullName>Phosphatidylcholine 2-acylhydrolase</fullName>
    </alternativeName>
    <alternativeName>
        <fullName>S2</fullName>
    </alternativeName>
    <alternativeName>
        <fullName>Viperotoxin F</fullName>
    </alternativeName>
    <alternativeName>
        <fullName>Viperotoxin toxic basic component</fullName>
    </alternativeName>
</protein>
<feature type="signal peptide" evidence="4 6">
    <location>
        <begin position="1"/>
        <end position="16"/>
    </location>
</feature>
<feature type="chain" id="PRO_0000022977" description="Basic phospholipase A2 RV-4">
    <location>
        <begin position="17"/>
        <end position="138"/>
    </location>
</feature>
<feature type="active site" evidence="1">
    <location>
        <position position="63"/>
    </location>
</feature>
<feature type="active site" evidence="1">
    <location>
        <position position="105"/>
    </location>
</feature>
<feature type="binding site" evidence="1">
    <location>
        <position position="43"/>
    </location>
    <ligand>
        <name>Ca(2+)</name>
        <dbReference type="ChEBI" id="CHEBI:29108"/>
    </ligand>
</feature>
<feature type="binding site" evidence="1">
    <location>
        <position position="45"/>
    </location>
    <ligand>
        <name>Ca(2+)</name>
        <dbReference type="ChEBI" id="CHEBI:29108"/>
    </ligand>
</feature>
<feature type="binding site" evidence="1">
    <location>
        <position position="47"/>
    </location>
    <ligand>
        <name>Ca(2+)</name>
        <dbReference type="ChEBI" id="CHEBI:29108"/>
    </ligand>
</feature>
<feature type="binding site" evidence="1">
    <location>
        <position position="64"/>
    </location>
    <ligand>
        <name>Ca(2+)</name>
        <dbReference type="ChEBI" id="CHEBI:29108"/>
    </ligand>
</feature>
<feature type="disulfide bond" evidence="5 10">
    <location>
        <begin position="42"/>
        <end position="131"/>
    </location>
</feature>
<feature type="disulfide bond" evidence="5 10">
    <location>
        <begin position="44"/>
        <end position="60"/>
    </location>
</feature>
<feature type="disulfide bond" evidence="5 10">
    <location>
        <begin position="59"/>
        <end position="111"/>
    </location>
</feature>
<feature type="disulfide bond" evidence="5 10">
    <location>
        <begin position="65"/>
        <end position="138"/>
    </location>
</feature>
<feature type="disulfide bond" evidence="5 10">
    <location>
        <begin position="66"/>
        <end position="104"/>
    </location>
</feature>
<feature type="disulfide bond" evidence="5 10">
    <location>
        <begin position="73"/>
        <end position="97"/>
    </location>
</feature>
<feature type="disulfide bond" evidence="5 10">
    <location>
        <begin position="91"/>
        <end position="102"/>
    </location>
</feature>
<feature type="helix" evidence="11">
    <location>
        <begin position="18"/>
        <end position="29"/>
    </location>
</feature>
<feature type="helix" evidence="11">
    <location>
        <begin position="33"/>
        <end position="37"/>
    </location>
</feature>
<feature type="strand" evidence="11">
    <location>
        <begin position="38"/>
        <end position="40"/>
    </location>
</feature>
<feature type="turn" evidence="11">
    <location>
        <begin position="41"/>
        <end position="43"/>
    </location>
</feature>
<feature type="strand" evidence="11">
    <location>
        <begin position="44"/>
        <end position="46"/>
    </location>
</feature>
<feature type="helix" evidence="11">
    <location>
        <begin position="55"/>
        <end position="68"/>
    </location>
</feature>
<feature type="turn" evidence="11">
    <location>
        <begin position="75"/>
        <end position="77"/>
    </location>
</feature>
<feature type="strand" evidence="11">
    <location>
        <begin position="82"/>
        <end position="85"/>
    </location>
</feature>
<feature type="strand" evidence="11">
    <location>
        <begin position="88"/>
        <end position="91"/>
    </location>
</feature>
<feature type="helix" evidence="11">
    <location>
        <begin position="97"/>
        <end position="114"/>
    </location>
</feature>
<feature type="turn" evidence="11">
    <location>
        <begin position="115"/>
        <end position="118"/>
    </location>
</feature>
<feature type="helix" evidence="11">
    <location>
        <begin position="121"/>
        <end position="123"/>
    </location>
</feature>
<feature type="helix" evidence="11">
    <location>
        <begin position="128"/>
        <end position="131"/>
    </location>
</feature>
<evidence type="ECO:0000250" key="1"/>
<evidence type="ECO:0000255" key="2">
    <source>
        <dbReference type="PROSITE-ProRule" id="PRU10035"/>
    </source>
</evidence>
<evidence type="ECO:0000255" key="3">
    <source>
        <dbReference type="PROSITE-ProRule" id="PRU10036"/>
    </source>
</evidence>
<evidence type="ECO:0000269" key="4">
    <source>
    </source>
</evidence>
<evidence type="ECO:0000269" key="5">
    <source>
    </source>
</evidence>
<evidence type="ECO:0000269" key="6">
    <source>
    </source>
</evidence>
<evidence type="ECO:0000305" key="7"/>
<evidence type="ECO:0000305" key="8">
    <source>
    </source>
</evidence>
<evidence type="ECO:0000305" key="9">
    <source>
    </source>
</evidence>
<evidence type="ECO:0007744" key="10">
    <source>
        <dbReference type="PDB" id="1OQS"/>
    </source>
</evidence>
<evidence type="ECO:0007829" key="11">
    <source>
        <dbReference type="PDB" id="1OQS"/>
    </source>
</evidence>
<dbReference type="EC" id="3.1.1.4"/>
<dbReference type="EMBL" id="X68385">
    <property type="protein sequence ID" value="CAA48456.1"/>
    <property type="molecule type" value="mRNA"/>
</dbReference>
<dbReference type="PDB" id="1OQS">
    <property type="method" value="X-ray"/>
    <property type="resolution" value="1.90 A"/>
    <property type="chains" value="B/D/F/H=17-138"/>
</dbReference>
<dbReference type="PDBsum" id="1OQS"/>
<dbReference type="SMR" id="Q02471"/>
<dbReference type="EvolutionaryTrace" id="Q02471"/>
<dbReference type="GO" id="GO:0005576">
    <property type="term" value="C:extracellular region"/>
    <property type="evidence" value="ECO:0007669"/>
    <property type="project" value="UniProtKB-SubCell"/>
</dbReference>
<dbReference type="GO" id="GO:0005509">
    <property type="term" value="F:calcium ion binding"/>
    <property type="evidence" value="ECO:0007669"/>
    <property type="project" value="InterPro"/>
</dbReference>
<dbReference type="GO" id="GO:0047498">
    <property type="term" value="F:calcium-dependent phospholipase A2 activity"/>
    <property type="evidence" value="ECO:0007669"/>
    <property type="project" value="TreeGrafter"/>
</dbReference>
<dbReference type="GO" id="GO:0005543">
    <property type="term" value="F:phospholipid binding"/>
    <property type="evidence" value="ECO:0007669"/>
    <property type="project" value="TreeGrafter"/>
</dbReference>
<dbReference type="GO" id="GO:0090729">
    <property type="term" value="F:toxin activity"/>
    <property type="evidence" value="ECO:0007669"/>
    <property type="project" value="UniProtKB-KW"/>
</dbReference>
<dbReference type="GO" id="GO:0050482">
    <property type="term" value="P:arachidonate secretion"/>
    <property type="evidence" value="ECO:0007669"/>
    <property type="project" value="InterPro"/>
</dbReference>
<dbReference type="GO" id="GO:0016042">
    <property type="term" value="P:lipid catabolic process"/>
    <property type="evidence" value="ECO:0007669"/>
    <property type="project" value="UniProtKB-KW"/>
</dbReference>
<dbReference type="GO" id="GO:0042130">
    <property type="term" value="P:negative regulation of T cell proliferation"/>
    <property type="evidence" value="ECO:0007669"/>
    <property type="project" value="TreeGrafter"/>
</dbReference>
<dbReference type="GO" id="GO:0006644">
    <property type="term" value="P:phospholipid metabolic process"/>
    <property type="evidence" value="ECO:0007669"/>
    <property type="project" value="InterPro"/>
</dbReference>
<dbReference type="CDD" id="cd00125">
    <property type="entry name" value="PLA2c"/>
    <property type="match status" value="1"/>
</dbReference>
<dbReference type="FunFam" id="1.20.90.10:FF:000001">
    <property type="entry name" value="Basic phospholipase A2 homolog"/>
    <property type="match status" value="1"/>
</dbReference>
<dbReference type="Gene3D" id="1.20.90.10">
    <property type="entry name" value="Phospholipase A2 domain"/>
    <property type="match status" value="1"/>
</dbReference>
<dbReference type="InterPro" id="IPR001211">
    <property type="entry name" value="PLipase_A2"/>
</dbReference>
<dbReference type="InterPro" id="IPR033112">
    <property type="entry name" value="PLipase_A2_Asp_AS"/>
</dbReference>
<dbReference type="InterPro" id="IPR016090">
    <property type="entry name" value="PLipase_A2_dom"/>
</dbReference>
<dbReference type="InterPro" id="IPR036444">
    <property type="entry name" value="PLipase_A2_dom_sf"/>
</dbReference>
<dbReference type="InterPro" id="IPR033113">
    <property type="entry name" value="PLipase_A2_His_AS"/>
</dbReference>
<dbReference type="PANTHER" id="PTHR11716">
    <property type="entry name" value="PHOSPHOLIPASE A2 FAMILY MEMBER"/>
    <property type="match status" value="1"/>
</dbReference>
<dbReference type="PANTHER" id="PTHR11716:SF9">
    <property type="entry name" value="PHOSPHOLIPASE A2, MEMBRANE ASSOCIATED"/>
    <property type="match status" value="1"/>
</dbReference>
<dbReference type="Pfam" id="PF00068">
    <property type="entry name" value="Phospholip_A2_1"/>
    <property type="match status" value="1"/>
</dbReference>
<dbReference type="PRINTS" id="PR00389">
    <property type="entry name" value="PHPHLIPASEA2"/>
</dbReference>
<dbReference type="SMART" id="SM00085">
    <property type="entry name" value="PA2c"/>
    <property type="match status" value="1"/>
</dbReference>
<dbReference type="SUPFAM" id="SSF48619">
    <property type="entry name" value="Phospholipase A2, PLA2"/>
    <property type="match status" value="1"/>
</dbReference>
<dbReference type="PROSITE" id="PS00119">
    <property type="entry name" value="PA2_ASP"/>
    <property type="match status" value="1"/>
</dbReference>
<dbReference type="PROSITE" id="PS00118">
    <property type="entry name" value="PA2_HIS"/>
    <property type="match status" value="1"/>
</dbReference>
<comment type="function">
    <text>Heterodimer RV-4/RV-7: acts as a presynaptic neurotoxin.</text>
</comment>
<comment type="function">
    <text>Monomer: snake venom phospholipase A2 (PLA2) that acts as a presynaptic neurotoxin. PLA2 catalyzes the calcium-dependent hydrolysis of the 2-acyl groups in 3-sn-phosphoglycerides.</text>
</comment>
<comment type="catalytic activity">
    <reaction evidence="2 3">
        <text>a 1,2-diacyl-sn-glycero-3-phosphocholine + H2O = a 1-acyl-sn-glycero-3-phosphocholine + a fatty acid + H(+)</text>
        <dbReference type="Rhea" id="RHEA:15801"/>
        <dbReference type="ChEBI" id="CHEBI:15377"/>
        <dbReference type="ChEBI" id="CHEBI:15378"/>
        <dbReference type="ChEBI" id="CHEBI:28868"/>
        <dbReference type="ChEBI" id="CHEBI:57643"/>
        <dbReference type="ChEBI" id="CHEBI:58168"/>
        <dbReference type="EC" id="3.1.1.4"/>
    </reaction>
</comment>
<comment type="cofactor">
    <cofactor evidence="1">
        <name>Ca(2+)</name>
        <dbReference type="ChEBI" id="CHEBI:29108"/>
    </cofactor>
    <text evidence="1">Binds 1 Ca(2+) ion.</text>
</comment>
<comment type="subunit">
    <text>Heterodimer of a weakly toxic basic protein having phospholipase A2 activity (RV-4) and a non-toxic acidic protein which inhibits its enzymatic activity but potentiates its lethal potency and neurotoxicity (RV-7).</text>
</comment>
<comment type="subcellular location">
    <subcellularLocation>
        <location evidence="4 6">Secreted</location>
    </subcellularLocation>
</comment>
<comment type="tissue specificity">
    <text evidence="8 9">Expressed by the venom gland.</text>
</comment>
<comment type="toxic dose">
    <text evidence="6">LD(50) is 0.32 mg/kg by intravenous injection for RV-4 and 0.15 mg/kg for RV-4/RV-7 complex.</text>
</comment>
<comment type="similarity">
    <text evidence="7">Belongs to the phospholipase A2 family. Group II subfamily. D49 sub-subfamily.</text>
</comment>
<proteinExistence type="evidence at protein level"/>
<sequence>MRTLWIVAVCLIGVEGNLFQFARMINGKLGAFSVWNYISYGCYCGWGGQGTPKDATDRCCFVHDCCYGGVKGCNPKLAIYSYSFQRGNIVCGRNNGCLRTICECDRVAANCFHQNKNTYNKEYKFLSSSKCRQRSEQC</sequence>
<name>PA2B4_DABSI</name>
<organism>
    <name type="scientific">Daboia siamensis</name>
    <name type="common">Eastern Russel's viper</name>
    <name type="synonym">Daboia russelii siamensis</name>
    <dbReference type="NCBI Taxonomy" id="343250"/>
    <lineage>
        <taxon>Eukaryota</taxon>
        <taxon>Metazoa</taxon>
        <taxon>Chordata</taxon>
        <taxon>Craniata</taxon>
        <taxon>Vertebrata</taxon>
        <taxon>Euteleostomi</taxon>
        <taxon>Lepidosauria</taxon>
        <taxon>Squamata</taxon>
        <taxon>Bifurcata</taxon>
        <taxon>Unidentata</taxon>
        <taxon>Episquamata</taxon>
        <taxon>Toxicofera</taxon>
        <taxon>Serpentes</taxon>
        <taxon>Colubroidea</taxon>
        <taxon>Viperidae</taxon>
        <taxon>Viperinae</taxon>
        <taxon>Daboia</taxon>
    </lineage>
</organism>
<keyword id="KW-0002">3D-structure</keyword>
<keyword id="KW-0106">Calcium</keyword>
<keyword id="KW-0903">Direct protein sequencing</keyword>
<keyword id="KW-1015">Disulfide bond</keyword>
<keyword id="KW-0378">Hydrolase</keyword>
<keyword id="KW-0442">Lipid degradation</keyword>
<keyword id="KW-0443">Lipid metabolism</keyword>
<keyword id="KW-0479">Metal-binding</keyword>
<keyword id="KW-0528">Neurotoxin</keyword>
<keyword id="KW-0638">Presynaptic neurotoxin</keyword>
<keyword id="KW-0964">Secreted</keyword>
<keyword id="KW-0732">Signal</keyword>
<keyword id="KW-0800">Toxin</keyword>